<proteinExistence type="inferred from homology"/>
<feature type="chain" id="PRO_0000152962" description="GTP 3',8-cyclase">
    <location>
        <begin position="1"/>
        <end position="325"/>
    </location>
</feature>
<feature type="domain" description="Radical SAM core" evidence="2">
    <location>
        <begin position="10"/>
        <end position="229"/>
    </location>
</feature>
<feature type="binding site" evidence="1">
    <location>
        <position position="19"/>
    </location>
    <ligand>
        <name>GTP</name>
        <dbReference type="ChEBI" id="CHEBI:37565"/>
    </ligand>
</feature>
<feature type="binding site" evidence="1">
    <location>
        <position position="26"/>
    </location>
    <ligand>
        <name>[4Fe-4S] cluster</name>
        <dbReference type="ChEBI" id="CHEBI:49883"/>
        <label>1</label>
        <note>4Fe-4S-S-AdoMet</note>
    </ligand>
</feature>
<feature type="binding site" evidence="1">
    <location>
        <position position="30"/>
    </location>
    <ligand>
        <name>[4Fe-4S] cluster</name>
        <dbReference type="ChEBI" id="CHEBI:49883"/>
        <label>1</label>
        <note>4Fe-4S-S-AdoMet</note>
    </ligand>
</feature>
<feature type="binding site" evidence="1">
    <location>
        <position position="32"/>
    </location>
    <ligand>
        <name>S-adenosyl-L-methionine</name>
        <dbReference type="ChEBI" id="CHEBI:59789"/>
    </ligand>
</feature>
<feature type="binding site" evidence="1">
    <location>
        <position position="33"/>
    </location>
    <ligand>
        <name>[4Fe-4S] cluster</name>
        <dbReference type="ChEBI" id="CHEBI:49883"/>
        <label>1</label>
        <note>4Fe-4S-S-AdoMet</note>
    </ligand>
</feature>
<feature type="binding site" evidence="1">
    <location>
        <position position="69"/>
    </location>
    <ligand>
        <name>GTP</name>
        <dbReference type="ChEBI" id="CHEBI:37565"/>
    </ligand>
</feature>
<feature type="binding site" evidence="1">
    <location>
        <position position="73"/>
    </location>
    <ligand>
        <name>S-adenosyl-L-methionine</name>
        <dbReference type="ChEBI" id="CHEBI:59789"/>
    </ligand>
</feature>
<feature type="binding site" evidence="1">
    <location>
        <position position="100"/>
    </location>
    <ligand>
        <name>GTP</name>
        <dbReference type="ChEBI" id="CHEBI:37565"/>
    </ligand>
</feature>
<feature type="binding site" evidence="1">
    <location>
        <position position="124"/>
    </location>
    <ligand>
        <name>S-adenosyl-L-methionine</name>
        <dbReference type="ChEBI" id="CHEBI:59789"/>
    </ligand>
</feature>
<feature type="binding site" evidence="1">
    <location>
        <position position="161"/>
    </location>
    <ligand>
        <name>GTP</name>
        <dbReference type="ChEBI" id="CHEBI:37565"/>
    </ligand>
</feature>
<feature type="binding site" evidence="1">
    <location>
        <position position="195"/>
    </location>
    <ligand>
        <name>S-adenosyl-L-methionine</name>
        <dbReference type="ChEBI" id="CHEBI:59789"/>
    </ligand>
</feature>
<feature type="binding site" evidence="1">
    <location>
        <position position="257"/>
    </location>
    <ligand>
        <name>[4Fe-4S] cluster</name>
        <dbReference type="ChEBI" id="CHEBI:49883"/>
        <label>2</label>
        <note>4Fe-4S-substrate</note>
    </ligand>
</feature>
<feature type="binding site" evidence="1">
    <location>
        <position position="260"/>
    </location>
    <ligand>
        <name>[4Fe-4S] cluster</name>
        <dbReference type="ChEBI" id="CHEBI:49883"/>
        <label>2</label>
        <note>4Fe-4S-substrate</note>
    </ligand>
</feature>
<feature type="binding site" evidence="1">
    <location>
        <begin position="262"/>
        <end position="264"/>
    </location>
    <ligand>
        <name>GTP</name>
        <dbReference type="ChEBI" id="CHEBI:37565"/>
    </ligand>
</feature>
<feature type="binding site" evidence="1">
    <location>
        <position position="274"/>
    </location>
    <ligand>
        <name>[4Fe-4S] cluster</name>
        <dbReference type="ChEBI" id="CHEBI:49883"/>
        <label>2</label>
        <note>4Fe-4S-substrate</note>
    </ligand>
</feature>
<reference key="1">
    <citation type="journal article" date="2001" name="J. Biol. Chem.">
        <title>Tungstate uptake by a highly specific ABC transporter in Eubacterium acidaminophilum.</title>
        <authorList>
            <person name="Makdessi K."/>
            <person name="Andreesen J.R."/>
            <person name="Pich A."/>
        </authorList>
    </citation>
    <scope>NUCLEOTIDE SEQUENCE [GENOMIC DNA]</scope>
    <source>
        <strain>ATCC 49065 / DSM 3953 / al-2</strain>
    </source>
</reference>
<protein>
    <recommendedName>
        <fullName evidence="1">GTP 3',8-cyclase</fullName>
        <ecNumber evidence="1">4.1.99.22</ecNumber>
    </recommendedName>
    <alternativeName>
        <fullName evidence="1">Molybdenum cofactor biosynthesis protein A</fullName>
    </alternativeName>
</protein>
<sequence length="325" mass="36437">MDNKSVLLDGYGRRINYLRISVTDRCNLRCMYCMPQEGIPKRAHHDIMTLEELQEVAVALVELGIDKIRITGGEPLVRKGIVGLVRELSKCEGLNEITLTTNGLLLSEYARELKAAGLKRVNISLDTLNPQKFEYITRGGSLEKVLEGIKEAQSVGLTPIKLNTVLIGGFNDDEIEDFVALTVDNEIDVRFIELMPYRTGSRLWSLEKFISSDSVLKKVPSLEKIKSEDISSPAEYYRIPGALGKVGLINPITCKFCENCNRLRLTSDGKLKLCLHSDSEIDLAGPLRRGEDIRGIVLDEIKNKPREHSLEDGEYIKRDMFKIGG</sequence>
<organism>
    <name type="scientific">Peptoclostridium acidaminophilum</name>
    <name type="common">Eubacterium acidaminophilum</name>
    <dbReference type="NCBI Taxonomy" id="1731"/>
    <lineage>
        <taxon>Bacteria</taxon>
        <taxon>Bacillati</taxon>
        <taxon>Bacillota</taxon>
        <taxon>Clostridia</taxon>
        <taxon>Peptostreptococcales</taxon>
        <taxon>Peptoclostridiaceae</taxon>
        <taxon>Peptoclostridium</taxon>
    </lineage>
</organism>
<dbReference type="EC" id="4.1.99.22" evidence="1"/>
<dbReference type="EMBL" id="AJ291988">
    <property type="protein sequence ID" value="CAC40787.1"/>
    <property type="status" value="ALT_FRAME"/>
    <property type="molecule type" value="Genomic_DNA"/>
</dbReference>
<dbReference type="SMR" id="Q93KD1"/>
<dbReference type="UniPathway" id="UPA00344"/>
<dbReference type="GO" id="GO:0051539">
    <property type="term" value="F:4 iron, 4 sulfur cluster binding"/>
    <property type="evidence" value="ECO:0007669"/>
    <property type="project" value="UniProtKB-UniRule"/>
</dbReference>
<dbReference type="GO" id="GO:0061799">
    <property type="term" value="F:cyclic pyranopterin monophosphate synthase activity"/>
    <property type="evidence" value="ECO:0007669"/>
    <property type="project" value="TreeGrafter"/>
</dbReference>
<dbReference type="GO" id="GO:0061798">
    <property type="term" value="F:GTP 3',8'-cyclase activity"/>
    <property type="evidence" value="ECO:0007669"/>
    <property type="project" value="UniProtKB-UniRule"/>
</dbReference>
<dbReference type="GO" id="GO:0005525">
    <property type="term" value="F:GTP binding"/>
    <property type="evidence" value="ECO:0007669"/>
    <property type="project" value="UniProtKB-UniRule"/>
</dbReference>
<dbReference type="GO" id="GO:0046872">
    <property type="term" value="F:metal ion binding"/>
    <property type="evidence" value="ECO:0007669"/>
    <property type="project" value="UniProtKB-KW"/>
</dbReference>
<dbReference type="GO" id="GO:1904047">
    <property type="term" value="F:S-adenosyl-L-methionine binding"/>
    <property type="evidence" value="ECO:0007669"/>
    <property type="project" value="UniProtKB-UniRule"/>
</dbReference>
<dbReference type="GO" id="GO:0006777">
    <property type="term" value="P:Mo-molybdopterin cofactor biosynthetic process"/>
    <property type="evidence" value="ECO:0007669"/>
    <property type="project" value="UniProtKB-UniRule"/>
</dbReference>
<dbReference type="CDD" id="cd01335">
    <property type="entry name" value="Radical_SAM"/>
    <property type="match status" value="1"/>
</dbReference>
<dbReference type="CDD" id="cd21117">
    <property type="entry name" value="Twitch_MoaA"/>
    <property type="match status" value="1"/>
</dbReference>
<dbReference type="Gene3D" id="3.20.20.70">
    <property type="entry name" value="Aldolase class I"/>
    <property type="match status" value="1"/>
</dbReference>
<dbReference type="HAMAP" id="MF_01225_B">
    <property type="entry name" value="MoaA_B"/>
    <property type="match status" value="1"/>
</dbReference>
<dbReference type="InterPro" id="IPR013785">
    <property type="entry name" value="Aldolase_TIM"/>
</dbReference>
<dbReference type="InterPro" id="IPR006638">
    <property type="entry name" value="Elp3/MiaA/NifB-like_rSAM"/>
</dbReference>
<dbReference type="InterPro" id="IPR013483">
    <property type="entry name" value="MoaA"/>
</dbReference>
<dbReference type="InterPro" id="IPR000385">
    <property type="entry name" value="MoaA_NifB_PqqE_Fe-S-bd_CS"/>
</dbReference>
<dbReference type="InterPro" id="IPR010505">
    <property type="entry name" value="MoaA_twitch"/>
</dbReference>
<dbReference type="InterPro" id="IPR050105">
    <property type="entry name" value="MoCo_biosynth_MoaA/MoaC"/>
</dbReference>
<dbReference type="InterPro" id="IPR007197">
    <property type="entry name" value="rSAM"/>
</dbReference>
<dbReference type="NCBIfam" id="TIGR02666">
    <property type="entry name" value="moaA"/>
    <property type="match status" value="1"/>
</dbReference>
<dbReference type="NCBIfam" id="NF001199">
    <property type="entry name" value="PRK00164.2-1"/>
    <property type="match status" value="1"/>
</dbReference>
<dbReference type="PANTHER" id="PTHR22960:SF0">
    <property type="entry name" value="MOLYBDENUM COFACTOR BIOSYNTHESIS PROTEIN 1"/>
    <property type="match status" value="1"/>
</dbReference>
<dbReference type="PANTHER" id="PTHR22960">
    <property type="entry name" value="MOLYBDOPTERIN COFACTOR SYNTHESIS PROTEIN A"/>
    <property type="match status" value="1"/>
</dbReference>
<dbReference type="Pfam" id="PF13353">
    <property type="entry name" value="Fer4_12"/>
    <property type="match status" value="1"/>
</dbReference>
<dbReference type="Pfam" id="PF06463">
    <property type="entry name" value="Mob_synth_C"/>
    <property type="match status" value="1"/>
</dbReference>
<dbReference type="Pfam" id="PF04055">
    <property type="entry name" value="Radical_SAM"/>
    <property type="match status" value="1"/>
</dbReference>
<dbReference type="SFLD" id="SFLDG01383">
    <property type="entry name" value="cyclic_pyranopterin_phosphate"/>
    <property type="match status" value="1"/>
</dbReference>
<dbReference type="SFLD" id="SFLDG01072">
    <property type="entry name" value="dehydrogenase_like"/>
    <property type="match status" value="1"/>
</dbReference>
<dbReference type="SMART" id="SM00729">
    <property type="entry name" value="Elp3"/>
    <property type="match status" value="1"/>
</dbReference>
<dbReference type="SUPFAM" id="SSF102114">
    <property type="entry name" value="Radical SAM enzymes"/>
    <property type="match status" value="1"/>
</dbReference>
<dbReference type="PROSITE" id="PS01305">
    <property type="entry name" value="MOAA_NIFB_PQQE"/>
    <property type="match status" value="1"/>
</dbReference>
<dbReference type="PROSITE" id="PS51918">
    <property type="entry name" value="RADICAL_SAM"/>
    <property type="match status" value="1"/>
</dbReference>
<name>MOAA_PEPAC</name>
<keyword id="KW-0004">4Fe-4S</keyword>
<keyword id="KW-0342">GTP-binding</keyword>
<keyword id="KW-0408">Iron</keyword>
<keyword id="KW-0411">Iron-sulfur</keyword>
<keyword id="KW-0456">Lyase</keyword>
<keyword id="KW-0479">Metal-binding</keyword>
<keyword id="KW-0501">Molybdenum cofactor biosynthesis</keyword>
<keyword id="KW-0547">Nucleotide-binding</keyword>
<keyword id="KW-0949">S-adenosyl-L-methionine</keyword>
<comment type="function">
    <text evidence="1">Catalyzes the cyclization of GTP to (8S)-3',8-cyclo-7,8-dihydroguanosine 5'-triphosphate.</text>
</comment>
<comment type="catalytic activity">
    <reaction evidence="1">
        <text>GTP + AH2 + S-adenosyl-L-methionine = (8S)-3',8-cyclo-7,8-dihydroguanosine 5'-triphosphate + 5'-deoxyadenosine + L-methionine + A + H(+)</text>
        <dbReference type="Rhea" id="RHEA:49576"/>
        <dbReference type="ChEBI" id="CHEBI:13193"/>
        <dbReference type="ChEBI" id="CHEBI:15378"/>
        <dbReference type="ChEBI" id="CHEBI:17319"/>
        <dbReference type="ChEBI" id="CHEBI:17499"/>
        <dbReference type="ChEBI" id="CHEBI:37565"/>
        <dbReference type="ChEBI" id="CHEBI:57844"/>
        <dbReference type="ChEBI" id="CHEBI:59789"/>
        <dbReference type="ChEBI" id="CHEBI:131766"/>
        <dbReference type="EC" id="4.1.99.22"/>
    </reaction>
</comment>
<comment type="cofactor">
    <cofactor evidence="1">
        <name>[4Fe-4S] cluster</name>
        <dbReference type="ChEBI" id="CHEBI:49883"/>
    </cofactor>
    <text evidence="1">Binds 2 [4Fe-4S] clusters. Binds 1 [4Fe-4S] cluster coordinated with 3 cysteines and an exchangeable S-adenosyl-L-methionine and 1 [4Fe-4S] cluster coordinated with 3 cysteines and the GTP-derived substrate.</text>
</comment>
<comment type="pathway">
    <text evidence="1">Cofactor biosynthesis; molybdopterin biosynthesis.</text>
</comment>
<comment type="subunit">
    <text evidence="1">Monomer and homodimer.</text>
</comment>
<comment type="similarity">
    <text evidence="1">Belongs to the radical SAM superfamily. MoaA family.</text>
</comment>
<comment type="sequence caution" evidence="3">
    <conflict type="frameshift">
        <sequence resource="EMBL-CDS" id="CAC40787"/>
    </conflict>
    <text>The corrected frameshifts allow to retrieve a conserved cysteine probably involved in coordination of the Fe-S cluster.</text>
</comment>
<accession>Q93KD1</accession>
<gene>
    <name evidence="1" type="primary">moaA</name>
</gene>
<evidence type="ECO:0000255" key="1">
    <source>
        <dbReference type="HAMAP-Rule" id="MF_01225"/>
    </source>
</evidence>
<evidence type="ECO:0000255" key="2">
    <source>
        <dbReference type="PROSITE-ProRule" id="PRU01266"/>
    </source>
</evidence>
<evidence type="ECO:0000305" key="3"/>